<accession>Q47GH9</accession>
<sequence>MLDIQQLRSNLDAVAEGLAKRGKPIDFSEFSALEAERKTLQTRTQDLQAQRNSLSKQIGMLKGKGEDASEVMAQVGSIGDELKASEARLAELLTQFNAILAALPNIPDDSVPVGSDETGNVEIKRWGTPRVFDFEVKDHTDVGEALGQLDFGTAAKISGARFSLLKGGLARLHRALAQFMLDTHTAEHGYTELYAPYLVNAASLYGTGQLPKFEEDLFKVLRGDQDPLYLIPTAEVPVTNIVRDEILSAEALPLKFVCHTPCFRSEAGSGGRDVRGMIRQHQFDKVELVQVVHPEKSAEAHEELTRQAEIILEKLELPYRRMALCSGDMGFSAAKTYDLEVWLPAQNTYREISSCSNFGAFQARRMQARFRNDKNKTELCHTLNGSGLAVGRTLVAILENNQNADGSVTIPAVLRPYMGGLEVLSAA</sequence>
<dbReference type="EC" id="6.1.1.11" evidence="1"/>
<dbReference type="EMBL" id="CP000089">
    <property type="protein sequence ID" value="AAZ46052.1"/>
    <property type="molecule type" value="Genomic_DNA"/>
</dbReference>
<dbReference type="SMR" id="Q47GH9"/>
<dbReference type="STRING" id="159087.Daro_1300"/>
<dbReference type="KEGG" id="dar:Daro_1300"/>
<dbReference type="eggNOG" id="COG0172">
    <property type="taxonomic scope" value="Bacteria"/>
</dbReference>
<dbReference type="HOGENOM" id="CLU_023797_1_1_4"/>
<dbReference type="OrthoDB" id="9804647at2"/>
<dbReference type="UniPathway" id="UPA00906">
    <property type="reaction ID" value="UER00895"/>
</dbReference>
<dbReference type="GO" id="GO:0005737">
    <property type="term" value="C:cytoplasm"/>
    <property type="evidence" value="ECO:0007669"/>
    <property type="project" value="UniProtKB-SubCell"/>
</dbReference>
<dbReference type="GO" id="GO:0005524">
    <property type="term" value="F:ATP binding"/>
    <property type="evidence" value="ECO:0007669"/>
    <property type="project" value="UniProtKB-UniRule"/>
</dbReference>
<dbReference type="GO" id="GO:0004828">
    <property type="term" value="F:serine-tRNA ligase activity"/>
    <property type="evidence" value="ECO:0007669"/>
    <property type="project" value="UniProtKB-UniRule"/>
</dbReference>
<dbReference type="GO" id="GO:0016260">
    <property type="term" value="P:selenocysteine biosynthetic process"/>
    <property type="evidence" value="ECO:0007669"/>
    <property type="project" value="UniProtKB-UniRule"/>
</dbReference>
<dbReference type="GO" id="GO:0006434">
    <property type="term" value="P:seryl-tRNA aminoacylation"/>
    <property type="evidence" value="ECO:0007669"/>
    <property type="project" value="UniProtKB-UniRule"/>
</dbReference>
<dbReference type="CDD" id="cd00770">
    <property type="entry name" value="SerRS_core"/>
    <property type="match status" value="1"/>
</dbReference>
<dbReference type="Gene3D" id="3.30.930.10">
    <property type="entry name" value="Bira Bifunctional Protein, Domain 2"/>
    <property type="match status" value="1"/>
</dbReference>
<dbReference type="Gene3D" id="1.10.287.40">
    <property type="entry name" value="Serine-tRNA synthetase, tRNA binding domain"/>
    <property type="match status" value="1"/>
</dbReference>
<dbReference type="HAMAP" id="MF_00176">
    <property type="entry name" value="Ser_tRNA_synth_type1"/>
    <property type="match status" value="1"/>
</dbReference>
<dbReference type="InterPro" id="IPR002314">
    <property type="entry name" value="aa-tRNA-synt_IIb"/>
</dbReference>
<dbReference type="InterPro" id="IPR006195">
    <property type="entry name" value="aa-tRNA-synth_II"/>
</dbReference>
<dbReference type="InterPro" id="IPR045864">
    <property type="entry name" value="aa-tRNA-synth_II/BPL/LPL"/>
</dbReference>
<dbReference type="InterPro" id="IPR002317">
    <property type="entry name" value="Ser-tRNA-ligase_type_1"/>
</dbReference>
<dbReference type="InterPro" id="IPR015866">
    <property type="entry name" value="Ser-tRNA-synth_1_N"/>
</dbReference>
<dbReference type="InterPro" id="IPR042103">
    <property type="entry name" value="SerRS_1_N_sf"/>
</dbReference>
<dbReference type="InterPro" id="IPR033729">
    <property type="entry name" value="SerRS_core"/>
</dbReference>
<dbReference type="InterPro" id="IPR010978">
    <property type="entry name" value="tRNA-bd_arm"/>
</dbReference>
<dbReference type="NCBIfam" id="TIGR00414">
    <property type="entry name" value="serS"/>
    <property type="match status" value="1"/>
</dbReference>
<dbReference type="PANTHER" id="PTHR43697:SF1">
    <property type="entry name" value="SERINE--TRNA LIGASE"/>
    <property type="match status" value="1"/>
</dbReference>
<dbReference type="PANTHER" id="PTHR43697">
    <property type="entry name" value="SERYL-TRNA SYNTHETASE"/>
    <property type="match status" value="1"/>
</dbReference>
<dbReference type="Pfam" id="PF02403">
    <property type="entry name" value="Seryl_tRNA_N"/>
    <property type="match status" value="1"/>
</dbReference>
<dbReference type="Pfam" id="PF00587">
    <property type="entry name" value="tRNA-synt_2b"/>
    <property type="match status" value="1"/>
</dbReference>
<dbReference type="PIRSF" id="PIRSF001529">
    <property type="entry name" value="Ser-tRNA-synth_IIa"/>
    <property type="match status" value="1"/>
</dbReference>
<dbReference type="PRINTS" id="PR00981">
    <property type="entry name" value="TRNASYNTHSER"/>
</dbReference>
<dbReference type="SUPFAM" id="SSF55681">
    <property type="entry name" value="Class II aaRS and biotin synthetases"/>
    <property type="match status" value="1"/>
</dbReference>
<dbReference type="SUPFAM" id="SSF46589">
    <property type="entry name" value="tRNA-binding arm"/>
    <property type="match status" value="1"/>
</dbReference>
<dbReference type="PROSITE" id="PS50862">
    <property type="entry name" value="AA_TRNA_LIGASE_II"/>
    <property type="match status" value="1"/>
</dbReference>
<reference key="1">
    <citation type="journal article" date="2009" name="BMC Genomics">
        <title>Metabolic analysis of the soil microbe Dechloromonas aromatica str. RCB: indications of a surprisingly complex life-style and cryptic anaerobic pathways for aromatic degradation.</title>
        <authorList>
            <person name="Salinero K.K."/>
            <person name="Keller K."/>
            <person name="Feil W.S."/>
            <person name="Feil H."/>
            <person name="Trong S."/>
            <person name="Di Bartolo G."/>
            <person name="Lapidus A."/>
        </authorList>
    </citation>
    <scope>NUCLEOTIDE SEQUENCE [LARGE SCALE GENOMIC DNA]</scope>
    <source>
        <strain>RCB</strain>
    </source>
</reference>
<gene>
    <name evidence="1" type="primary">serS</name>
    <name type="ordered locus">Daro_1300</name>
</gene>
<evidence type="ECO:0000255" key="1">
    <source>
        <dbReference type="HAMAP-Rule" id="MF_00176"/>
    </source>
</evidence>
<name>SYS_DECAR</name>
<protein>
    <recommendedName>
        <fullName evidence="1">Serine--tRNA ligase</fullName>
        <ecNumber evidence="1">6.1.1.11</ecNumber>
    </recommendedName>
    <alternativeName>
        <fullName evidence="1">Seryl-tRNA synthetase</fullName>
        <shortName evidence="1">SerRS</shortName>
    </alternativeName>
    <alternativeName>
        <fullName evidence="1">Seryl-tRNA(Ser/Sec) synthetase</fullName>
    </alternativeName>
</protein>
<proteinExistence type="inferred from homology"/>
<keyword id="KW-0030">Aminoacyl-tRNA synthetase</keyword>
<keyword id="KW-0067">ATP-binding</keyword>
<keyword id="KW-0963">Cytoplasm</keyword>
<keyword id="KW-0436">Ligase</keyword>
<keyword id="KW-0547">Nucleotide-binding</keyword>
<keyword id="KW-0648">Protein biosynthesis</keyword>
<feature type="chain" id="PRO_1000019665" description="Serine--tRNA ligase">
    <location>
        <begin position="1"/>
        <end position="427"/>
    </location>
</feature>
<feature type="binding site" evidence="1">
    <location>
        <begin position="233"/>
        <end position="235"/>
    </location>
    <ligand>
        <name>L-serine</name>
        <dbReference type="ChEBI" id="CHEBI:33384"/>
    </ligand>
</feature>
<feature type="binding site" evidence="1">
    <location>
        <begin position="264"/>
        <end position="266"/>
    </location>
    <ligand>
        <name>ATP</name>
        <dbReference type="ChEBI" id="CHEBI:30616"/>
    </ligand>
</feature>
<feature type="binding site" evidence="1">
    <location>
        <position position="287"/>
    </location>
    <ligand>
        <name>L-serine</name>
        <dbReference type="ChEBI" id="CHEBI:33384"/>
    </ligand>
</feature>
<feature type="binding site" evidence="1">
    <location>
        <begin position="351"/>
        <end position="354"/>
    </location>
    <ligand>
        <name>ATP</name>
        <dbReference type="ChEBI" id="CHEBI:30616"/>
    </ligand>
</feature>
<feature type="binding site" evidence="1">
    <location>
        <position position="386"/>
    </location>
    <ligand>
        <name>L-serine</name>
        <dbReference type="ChEBI" id="CHEBI:33384"/>
    </ligand>
</feature>
<organism>
    <name type="scientific">Dechloromonas aromatica (strain RCB)</name>
    <dbReference type="NCBI Taxonomy" id="159087"/>
    <lineage>
        <taxon>Bacteria</taxon>
        <taxon>Pseudomonadati</taxon>
        <taxon>Pseudomonadota</taxon>
        <taxon>Betaproteobacteria</taxon>
        <taxon>Rhodocyclales</taxon>
        <taxon>Azonexaceae</taxon>
        <taxon>Dechloromonas</taxon>
    </lineage>
</organism>
<comment type="function">
    <text evidence="1">Catalyzes the attachment of serine to tRNA(Ser). Is also able to aminoacylate tRNA(Sec) with serine, to form the misacylated tRNA L-seryl-tRNA(Sec), which will be further converted into selenocysteinyl-tRNA(Sec).</text>
</comment>
<comment type="catalytic activity">
    <reaction evidence="1">
        <text>tRNA(Ser) + L-serine + ATP = L-seryl-tRNA(Ser) + AMP + diphosphate + H(+)</text>
        <dbReference type="Rhea" id="RHEA:12292"/>
        <dbReference type="Rhea" id="RHEA-COMP:9669"/>
        <dbReference type="Rhea" id="RHEA-COMP:9703"/>
        <dbReference type="ChEBI" id="CHEBI:15378"/>
        <dbReference type="ChEBI" id="CHEBI:30616"/>
        <dbReference type="ChEBI" id="CHEBI:33019"/>
        <dbReference type="ChEBI" id="CHEBI:33384"/>
        <dbReference type="ChEBI" id="CHEBI:78442"/>
        <dbReference type="ChEBI" id="CHEBI:78533"/>
        <dbReference type="ChEBI" id="CHEBI:456215"/>
        <dbReference type="EC" id="6.1.1.11"/>
    </reaction>
</comment>
<comment type="catalytic activity">
    <reaction evidence="1">
        <text>tRNA(Sec) + L-serine + ATP = L-seryl-tRNA(Sec) + AMP + diphosphate + H(+)</text>
        <dbReference type="Rhea" id="RHEA:42580"/>
        <dbReference type="Rhea" id="RHEA-COMP:9742"/>
        <dbReference type="Rhea" id="RHEA-COMP:10128"/>
        <dbReference type="ChEBI" id="CHEBI:15378"/>
        <dbReference type="ChEBI" id="CHEBI:30616"/>
        <dbReference type="ChEBI" id="CHEBI:33019"/>
        <dbReference type="ChEBI" id="CHEBI:33384"/>
        <dbReference type="ChEBI" id="CHEBI:78442"/>
        <dbReference type="ChEBI" id="CHEBI:78533"/>
        <dbReference type="ChEBI" id="CHEBI:456215"/>
        <dbReference type="EC" id="6.1.1.11"/>
    </reaction>
</comment>
<comment type="pathway">
    <text evidence="1">Aminoacyl-tRNA biosynthesis; selenocysteinyl-tRNA(Sec) biosynthesis; L-seryl-tRNA(Sec) from L-serine and tRNA(Sec): step 1/1.</text>
</comment>
<comment type="subunit">
    <text evidence="1">Homodimer. The tRNA molecule binds across the dimer.</text>
</comment>
<comment type="subcellular location">
    <subcellularLocation>
        <location evidence="1">Cytoplasm</location>
    </subcellularLocation>
</comment>
<comment type="domain">
    <text evidence="1">Consists of two distinct domains, a catalytic core and a N-terminal extension that is involved in tRNA binding.</text>
</comment>
<comment type="similarity">
    <text evidence="1">Belongs to the class-II aminoacyl-tRNA synthetase family. Type-1 seryl-tRNA synthetase subfamily.</text>
</comment>